<comment type="function">
    <text evidence="2">Catalyzes the removal of methylamine from 4-methylaminobutanoate with the formation of succinate semialdehyde. Is involved in the catabolism of 4-methylaminobutanoate produced from nicotine. Has a very weak monoamine oxidase activity with 4-aminobutanoate. Cannot use spermidine, spermine, sarcosine, dimethylglycine, glycine, choline, betaine, alpha-methylamino isobutyrate, methylamine propionitrile and methylamino propylamine as substrate.</text>
</comment>
<comment type="catalytic activity">
    <reaction evidence="2">
        <text>4-(methylamino)butanoate + O2 + H2O = succinate semialdehyde + methylamine + H2O2</text>
        <dbReference type="Rhea" id="RHEA:33915"/>
        <dbReference type="ChEBI" id="CHEBI:15377"/>
        <dbReference type="ChEBI" id="CHEBI:15379"/>
        <dbReference type="ChEBI" id="CHEBI:16240"/>
        <dbReference type="ChEBI" id="CHEBI:57706"/>
        <dbReference type="ChEBI" id="CHEBI:59338"/>
        <dbReference type="ChEBI" id="CHEBI:66882"/>
        <dbReference type="EC" id="1.5.3.21"/>
    </reaction>
</comment>
<comment type="cofactor">
    <cofactor evidence="2">
        <name>FAD</name>
        <dbReference type="ChEBI" id="CHEBI:57692"/>
    </cofactor>
</comment>
<comment type="biophysicochemical properties">
    <kinetics>
        <KM evidence="2">0.25 mM for 4-methylaminobutanoate</KM>
        <KM evidence="2">6.66 mM for 4-aminobutanoate</KM>
        <text>kcat is 1230 sec(-1) with 4-methylaminobutanoate as substrate. kcat is 878 sec(-1) with 4-aminobutanoate as substrate.</text>
    </kinetics>
    <phDependence>
        <text evidence="2">Optimum pH is 9.8.</text>
    </phDependence>
</comment>
<comment type="pathway">
    <text evidence="2">Alkaloid degradation; nicotine degradation.</text>
</comment>
<comment type="subunit">
    <text evidence="2">Monomer.</text>
</comment>
<comment type="induction">
    <text evidence="2">Is transcribed only in the presence of nicotine.</text>
</comment>
<comment type="similarity">
    <text evidence="3">Belongs to the flavin monoamine oxidase family.</text>
</comment>
<protein>
    <recommendedName>
        <fullName>4-methylaminobutanoate oxidase (methylamine-forming)</fullName>
        <ecNumber>1.5.3.21</ecNumber>
    </recommendedName>
    <alternativeName>
        <fullName>Gamma-N-methylaminobutyrate oxidase 2</fullName>
    </alternativeName>
</protein>
<keyword id="KW-0002">3D-structure</keyword>
<keyword id="KW-0285">Flavoprotein</keyword>
<keyword id="KW-0560">Oxidoreductase</keyword>
<keyword id="KW-0614">Plasmid</keyword>
<dbReference type="EC" id="1.5.3.21"/>
<dbReference type="EMBL" id="AJ507836">
    <property type="protein sequence ID" value="CAD47914.1"/>
    <property type="molecule type" value="Genomic_DNA"/>
</dbReference>
<dbReference type="RefSeq" id="WP_016359425.1">
    <property type="nucleotide sequence ID" value="NC_021229.1"/>
</dbReference>
<dbReference type="RefSeq" id="YP_007988740.1">
    <property type="nucleotide sequence ID" value="NC_021229.1"/>
</dbReference>
<dbReference type="PDB" id="7RT0">
    <property type="method" value="X-ray"/>
    <property type="resolution" value="1.80 A"/>
    <property type="chains" value="A=1-421"/>
</dbReference>
<dbReference type="PDBsum" id="7RT0"/>
<dbReference type="SMR" id="Q8GAJ0"/>
<dbReference type="GeneID" id="84020263"/>
<dbReference type="KEGG" id="ag:CAD47914"/>
<dbReference type="BioCyc" id="MetaCyc:MONOMER-17144"/>
<dbReference type="UniPathway" id="UPA00106"/>
<dbReference type="GO" id="GO:0016491">
    <property type="term" value="F:oxidoreductase activity"/>
    <property type="evidence" value="ECO:0007669"/>
    <property type="project" value="UniProtKB-KW"/>
</dbReference>
<dbReference type="GO" id="GO:0019608">
    <property type="term" value="P:nicotine catabolic process"/>
    <property type="evidence" value="ECO:0007669"/>
    <property type="project" value="UniProtKB-UniPathway"/>
</dbReference>
<dbReference type="Gene3D" id="3.50.50.60">
    <property type="entry name" value="FAD/NAD(P)-binding domain"/>
    <property type="match status" value="1"/>
</dbReference>
<dbReference type="InterPro" id="IPR002937">
    <property type="entry name" value="Amino_oxidase"/>
</dbReference>
<dbReference type="InterPro" id="IPR036188">
    <property type="entry name" value="FAD/NAD-bd_sf"/>
</dbReference>
<dbReference type="InterPro" id="IPR050281">
    <property type="entry name" value="Flavin_monoamine_oxidase"/>
</dbReference>
<dbReference type="PANTHER" id="PTHR10742">
    <property type="entry name" value="FLAVIN MONOAMINE OXIDASE"/>
    <property type="match status" value="1"/>
</dbReference>
<dbReference type="PANTHER" id="PTHR10742:SF410">
    <property type="entry name" value="LYSINE-SPECIFIC HISTONE DEMETHYLASE 2"/>
    <property type="match status" value="1"/>
</dbReference>
<dbReference type="Pfam" id="PF01593">
    <property type="entry name" value="Amino_oxidase"/>
    <property type="match status" value="1"/>
</dbReference>
<dbReference type="PRINTS" id="PR00419">
    <property type="entry name" value="ADXRDTASE"/>
</dbReference>
<dbReference type="SUPFAM" id="SSF51905">
    <property type="entry name" value="FAD/NAD(P)-binding domain"/>
    <property type="match status" value="1"/>
</dbReference>
<feature type="chain" id="PRO_0000424218" description="4-methylaminobutanoate oxidase (methylamine-forming)">
    <location>
        <begin position="1"/>
        <end position="421"/>
    </location>
</feature>
<feature type="binding site" evidence="1">
    <location>
        <position position="31"/>
    </location>
    <ligand>
        <name>FAD</name>
        <dbReference type="ChEBI" id="CHEBI:57692"/>
    </ligand>
</feature>
<feature type="binding site" evidence="1">
    <location>
        <position position="33"/>
    </location>
    <ligand>
        <name>FAD</name>
        <dbReference type="ChEBI" id="CHEBI:57692"/>
    </ligand>
</feature>
<feature type="binding site" evidence="1">
    <location>
        <position position="39"/>
    </location>
    <ligand>
        <name>FAD</name>
        <dbReference type="ChEBI" id="CHEBI:57692"/>
    </ligand>
</feature>
<feature type="binding site" evidence="1">
    <location>
        <position position="379"/>
    </location>
    <ligand>
        <name>FAD</name>
        <dbReference type="ChEBI" id="CHEBI:57692"/>
    </ligand>
</feature>
<feature type="strand" evidence="4">
    <location>
        <begin position="3"/>
        <end position="7"/>
    </location>
</feature>
<feature type="helix" evidence="4">
    <location>
        <begin position="11"/>
        <end position="22"/>
    </location>
</feature>
<feature type="strand" evidence="4">
    <location>
        <begin position="26"/>
        <end position="37"/>
    </location>
</feature>
<feature type="strand" evidence="4">
    <location>
        <begin position="42"/>
        <end position="47"/>
    </location>
</feature>
<feature type="strand" evidence="4">
    <location>
        <begin position="50"/>
        <end position="57"/>
    </location>
</feature>
<feature type="helix" evidence="4">
    <location>
        <begin position="66"/>
        <end position="74"/>
    </location>
</feature>
<feature type="strand" evidence="4">
    <location>
        <begin position="79"/>
        <end position="81"/>
    </location>
</feature>
<feature type="helix" evidence="4">
    <location>
        <begin position="94"/>
        <end position="104"/>
    </location>
</feature>
<feature type="helix" evidence="4">
    <location>
        <begin position="122"/>
        <end position="126"/>
    </location>
</feature>
<feature type="helix" evidence="4">
    <location>
        <begin position="133"/>
        <end position="147"/>
    </location>
</feature>
<feature type="turn" evidence="4">
    <location>
        <begin position="151"/>
        <end position="153"/>
    </location>
</feature>
<feature type="helix" evidence="4">
    <location>
        <begin position="156"/>
        <end position="159"/>
    </location>
</feature>
<feature type="strand" evidence="4">
    <location>
        <begin position="171"/>
        <end position="173"/>
    </location>
</feature>
<feature type="helix" evidence="4">
    <location>
        <begin position="179"/>
        <end position="188"/>
    </location>
</feature>
<feature type="helix" evidence="4">
    <location>
        <begin position="189"/>
        <end position="191"/>
    </location>
</feature>
<feature type="strand" evidence="4">
    <location>
        <begin position="192"/>
        <end position="194"/>
    </location>
</feature>
<feature type="strand" evidence="4">
    <location>
        <begin position="198"/>
        <end position="203"/>
    </location>
</feature>
<feature type="strand" evidence="4">
    <location>
        <begin position="209"/>
        <end position="215"/>
    </location>
</feature>
<feature type="strand" evidence="4">
    <location>
        <begin position="217"/>
        <end position="225"/>
    </location>
</feature>
<feature type="helix" evidence="4">
    <location>
        <begin position="229"/>
        <end position="232"/>
    </location>
</feature>
<feature type="helix" evidence="4">
    <location>
        <begin position="243"/>
        <end position="249"/>
    </location>
</feature>
<feature type="strand" evidence="4">
    <location>
        <begin position="252"/>
        <end position="255"/>
    </location>
</feature>
<feature type="strand" evidence="4">
    <location>
        <begin position="257"/>
        <end position="263"/>
    </location>
</feature>
<feature type="strand" evidence="4">
    <location>
        <begin position="271"/>
        <end position="275"/>
    </location>
</feature>
<feature type="turn" evidence="4">
    <location>
        <begin position="276"/>
        <end position="279"/>
    </location>
</feature>
<feature type="strand" evidence="4">
    <location>
        <begin position="280"/>
        <end position="284"/>
    </location>
</feature>
<feature type="strand" evidence="4">
    <location>
        <begin position="290"/>
        <end position="292"/>
    </location>
</feature>
<feature type="strand" evidence="4">
    <location>
        <begin position="294"/>
        <end position="302"/>
    </location>
</feature>
<feature type="helix" evidence="4">
    <location>
        <begin position="303"/>
        <end position="309"/>
    </location>
</feature>
<feature type="turn" evidence="4">
    <location>
        <begin position="310"/>
        <end position="313"/>
    </location>
</feature>
<feature type="helix" evidence="4">
    <location>
        <begin position="316"/>
        <end position="325"/>
    </location>
</feature>
<feature type="turn" evidence="4">
    <location>
        <begin position="326"/>
        <end position="328"/>
    </location>
</feature>
<feature type="strand" evidence="4">
    <location>
        <begin position="338"/>
        <end position="341"/>
    </location>
</feature>
<feature type="helix" evidence="4">
    <location>
        <begin position="342"/>
        <end position="344"/>
    </location>
</feature>
<feature type="turn" evidence="4">
    <location>
        <begin position="346"/>
        <end position="348"/>
    </location>
</feature>
<feature type="strand" evidence="4">
    <location>
        <begin position="350"/>
        <end position="355"/>
    </location>
</feature>
<feature type="helix" evidence="4">
    <location>
        <begin position="361"/>
        <end position="366"/>
    </location>
</feature>
<feature type="strand" evidence="4">
    <location>
        <begin position="374"/>
        <end position="376"/>
    </location>
</feature>
<feature type="helix" evidence="4">
    <location>
        <begin position="379"/>
        <end position="381"/>
    </location>
</feature>
<feature type="strand" evidence="4">
    <location>
        <begin position="383"/>
        <end position="385"/>
    </location>
</feature>
<feature type="helix" evidence="4">
    <location>
        <begin position="389"/>
        <end position="410"/>
    </location>
</feature>
<geneLocation type="plasmid">
    <name>pAO1</name>
</geneLocation>
<proteinExistence type="evidence at protein level"/>
<gene>
    <name type="primary">mao</name>
    <name type="ORF">ORF56</name>
</gene>
<accession>Q8GAJ0</accession>
<sequence>MGRIGILGAGLAGLAAATKLAEAGENVTVFEARNRPGGRVWSETLDTPKGSYVIERGAEFVLDGYTSMRRLLSQFGLSLVDTGMSYYVREPGDTTGITCDDIIRTGREALELASGSGLQGTAEELLAKLPDEPELVDALRARIEISTAVSASEVTARSLQHIASFEPKPSWRVAGGNQRLPDAMAAALGSAVRYGETVRAVENISDGGVLVTTDTDTSVFDTVVVALPLAVIRDSQLNLPTTEARDAALKHVLQGHAAKLHLPLETQPATSAVMSVEGRYWTWTATDESGAVAPVLNAFMGSPSAITRANLKQRPAEWVAKARALRTDLAIPQDAAALTTVWSEDQLAGGAYAAHAPGVTAAGTALLEKPVGDVFWAGEYSEPEFVGLMEGAIRSGERAAGRVMQRLETKSGNSDSERSKA</sequence>
<name>MABO2_PAENI</name>
<evidence type="ECO:0000250" key="1"/>
<evidence type="ECO:0000269" key="2">
    <source>
    </source>
</evidence>
<evidence type="ECO:0000305" key="3"/>
<evidence type="ECO:0007829" key="4">
    <source>
        <dbReference type="PDB" id="7RT0"/>
    </source>
</evidence>
<organism>
    <name type="scientific">Paenarthrobacter nicotinovorans</name>
    <name type="common">Arthrobacter nicotinovorans</name>
    <dbReference type="NCBI Taxonomy" id="29320"/>
    <lineage>
        <taxon>Bacteria</taxon>
        <taxon>Bacillati</taxon>
        <taxon>Actinomycetota</taxon>
        <taxon>Actinomycetes</taxon>
        <taxon>Micrococcales</taxon>
        <taxon>Micrococcaceae</taxon>
        <taxon>Paenarthrobacter</taxon>
    </lineage>
</organism>
<reference key="1">
    <citation type="journal article" date="2003" name="J. Bacteriol.">
        <title>Sequence of the 165-kilobase catabolic plasmid pAO1 from Arthrobacter nicotinovorans and identification of a pAO1-dependent nicotine uptake system.</title>
        <authorList>
            <person name="Igloi G.L."/>
            <person name="Brandsch R."/>
        </authorList>
    </citation>
    <scope>NUCLEOTIDE SEQUENCE [GENOMIC DNA]</scope>
    <source>
        <strain>ATCC 49919 / DSM 420 / JCM 3874 / KCTC 9902 / LMG 16253 / NBRC 15511</strain>
        <plasmid>pAO1</plasmid>
    </source>
</reference>
<reference key="2">
    <citation type="journal article" date="2006" name="FEBS J.">
        <title>Final steps in the catabolism of nicotine.</title>
        <authorList>
            <person name="Chiribau C.B."/>
            <person name="Mihasan M."/>
            <person name="Ganas P."/>
            <person name="Igloi G.L."/>
            <person name="Artenie V."/>
            <person name="Brandsch R."/>
        </authorList>
    </citation>
    <scope>FUNCTION</scope>
    <scope>CATALYTIC ACTIVITY</scope>
    <scope>COFACTOR</scope>
    <scope>SUBSTRATE SPECIFICITY</scope>
    <scope>BIOPHYSICOCHEMICAL PROPERTIES</scope>
    <scope>SUBUNIT</scope>
    <scope>PATHWAY</scope>
    <scope>INDUCTION</scope>
    <source>
        <strain>ATCC 49919 / DSM 420 / JCM 3874 / KCTC 9902 / LMG 16253 / NBRC 15511</strain>
        <plasmid>pAO1</plasmid>
    </source>
</reference>